<feature type="chain" id="PRO_1000188616" description="Probable dual-specificity RNA methyltransferase RlmN">
    <location>
        <begin position="1"/>
        <end position="343"/>
    </location>
</feature>
<feature type="domain" description="Radical SAM core" evidence="2">
    <location>
        <begin position="97"/>
        <end position="326"/>
    </location>
</feature>
<feature type="active site" description="Proton acceptor" evidence="1">
    <location>
        <position position="91"/>
    </location>
</feature>
<feature type="active site" description="S-methylcysteine intermediate" evidence="1">
    <location>
        <position position="331"/>
    </location>
</feature>
<feature type="binding site" evidence="1">
    <location>
        <position position="111"/>
    </location>
    <ligand>
        <name>[4Fe-4S] cluster</name>
        <dbReference type="ChEBI" id="CHEBI:49883"/>
        <note>4Fe-4S-S-AdoMet</note>
    </ligand>
</feature>
<feature type="binding site" evidence="1">
    <location>
        <position position="115"/>
    </location>
    <ligand>
        <name>[4Fe-4S] cluster</name>
        <dbReference type="ChEBI" id="CHEBI:49883"/>
        <note>4Fe-4S-S-AdoMet</note>
    </ligand>
</feature>
<feature type="binding site" evidence="1">
    <location>
        <position position="118"/>
    </location>
    <ligand>
        <name>[4Fe-4S] cluster</name>
        <dbReference type="ChEBI" id="CHEBI:49883"/>
        <note>4Fe-4S-S-AdoMet</note>
    </ligand>
</feature>
<feature type="binding site" evidence="1">
    <location>
        <begin position="158"/>
        <end position="159"/>
    </location>
    <ligand>
        <name>S-adenosyl-L-methionine</name>
        <dbReference type="ChEBI" id="CHEBI:59789"/>
    </ligand>
</feature>
<feature type="binding site" evidence="1">
    <location>
        <position position="190"/>
    </location>
    <ligand>
        <name>S-adenosyl-L-methionine</name>
        <dbReference type="ChEBI" id="CHEBI:59789"/>
    </ligand>
</feature>
<feature type="binding site" evidence="1">
    <location>
        <begin position="213"/>
        <end position="215"/>
    </location>
    <ligand>
        <name>S-adenosyl-L-methionine</name>
        <dbReference type="ChEBI" id="CHEBI:59789"/>
    </ligand>
</feature>
<feature type="binding site" evidence="1">
    <location>
        <position position="289"/>
    </location>
    <ligand>
        <name>S-adenosyl-L-methionine</name>
        <dbReference type="ChEBI" id="CHEBI:59789"/>
    </ligand>
</feature>
<feature type="disulfide bond" description="(transient)" evidence="1">
    <location>
        <begin position="104"/>
        <end position="331"/>
    </location>
</feature>
<gene>
    <name evidence="1" type="primary">rlmN</name>
    <name type="ordered locus">CTN_0903</name>
</gene>
<dbReference type="EC" id="2.1.1.192" evidence="1"/>
<dbReference type="EMBL" id="CP000916">
    <property type="protein sequence ID" value="ACM23079.1"/>
    <property type="molecule type" value="Genomic_DNA"/>
</dbReference>
<dbReference type="RefSeq" id="WP_015919396.1">
    <property type="nucleotide sequence ID" value="NC_011978.1"/>
</dbReference>
<dbReference type="SMR" id="B9K7Z6"/>
<dbReference type="STRING" id="309803.CTN_0903"/>
<dbReference type="KEGG" id="tna:CTN_0903"/>
<dbReference type="eggNOG" id="COG0820">
    <property type="taxonomic scope" value="Bacteria"/>
</dbReference>
<dbReference type="HOGENOM" id="CLU_029101_2_0_0"/>
<dbReference type="Proteomes" id="UP000000445">
    <property type="component" value="Chromosome"/>
</dbReference>
<dbReference type="GO" id="GO:0005737">
    <property type="term" value="C:cytoplasm"/>
    <property type="evidence" value="ECO:0007669"/>
    <property type="project" value="UniProtKB-SubCell"/>
</dbReference>
<dbReference type="GO" id="GO:0051539">
    <property type="term" value="F:4 iron, 4 sulfur cluster binding"/>
    <property type="evidence" value="ECO:0007669"/>
    <property type="project" value="UniProtKB-UniRule"/>
</dbReference>
<dbReference type="GO" id="GO:0046872">
    <property type="term" value="F:metal ion binding"/>
    <property type="evidence" value="ECO:0007669"/>
    <property type="project" value="UniProtKB-KW"/>
</dbReference>
<dbReference type="GO" id="GO:0070040">
    <property type="term" value="F:rRNA (adenine(2503)-C2-)-methyltransferase activity"/>
    <property type="evidence" value="ECO:0007669"/>
    <property type="project" value="UniProtKB-UniRule"/>
</dbReference>
<dbReference type="GO" id="GO:0019843">
    <property type="term" value="F:rRNA binding"/>
    <property type="evidence" value="ECO:0007669"/>
    <property type="project" value="UniProtKB-UniRule"/>
</dbReference>
<dbReference type="GO" id="GO:0002935">
    <property type="term" value="F:tRNA (adenine(37)-C2)-methyltransferase activity"/>
    <property type="evidence" value="ECO:0007669"/>
    <property type="project" value="UniProtKB-UniRule"/>
</dbReference>
<dbReference type="GO" id="GO:0000049">
    <property type="term" value="F:tRNA binding"/>
    <property type="evidence" value="ECO:0007669"/>
    <property type="project" value="UniProtKB-UniRule"/>
</dbReference>
<dbReference type="GO" id="GO:0070475">
    <property type="term" value="P:rRNA base methylation"/>
    <property type="evidence" value="ECO:0007669"/>
    <property type="project" value="UniProtKB-UniRule"/>
</dbReference>
<dbReference type="GO" id="GO:0030488">
    <property type="term" value="P:tRNA methylation"/>
    <property type="evidence" value="ECO:0007669"/>
    <property type="project" value="UniProtKB-UniRule"/>
</dbReference>
<dbReference type="CDD" id="cd01335">
    <property type="entry name" value="Radical_SAM"/>
    <property type="match status" value="1"/>
</dbReference>
<dbReference type="FunFam" id="1.10.150.530:FF:000006">
    <property type="entry name" value="Probable dual-specificity RNA methyltransferase RlmN"/>
    <property type="match status" value="1"/>
</dbReference>
<dbReference type="FunFam" id="3.20.20.70:FF:000014">
    <property type="entry name" value="Probable dual-specificity RNA methyltransferase RlmN"/>
    <property type="match status" value="1"/>
</dbReference>
<dbReference type="Gene3D" id="1.10.150.530">
    <property type="match status" value="1"/>
</dbReference>
<dbReference type="Gene3D" id="3.20.20.70">
    <property type="entry name" value="Aldolase class I"/>
    <property type="match status" value="1"/>
</dbReference>
<dbReference type="HAMAP" id="MF_01849">
    <property type="entry name" value="RNA_methyltr_RlmN"/>
    <property type="match status" value="1"/>
</dbReference>
<dbReference type="InterPro" id="IPR013785">
    <property type="entry name" value="Aldolase_TIM"/>
</dbReference>
<dbReference type="InterPro" id="IPR006638">
    <property type="entry name" value="Elp3/MiaA/NifB-like_rSAM"/>
</dbReference>
<dbReference type="InterPro" id="IPR040072">
    <property type="entry name" value="Methyltransferase_A"/>
</dbReference>
<dbReference type="InterPro" id="IPR048641">
    <property type="entry name" value="RlmN_N"/>
</dbReference>
<dbReference type="InterPro" id="IPR027492">
    <property type="entry name" value="RNA_MTrfase_RlmN"/>
</dbReference>
<dbReference type="InterPro" id="IPR004383">
    <property type="entry name" value="rRNA_lsu_MTrfase_RlmN/Cfr"/>
</dbReference>
<dbReference type="InterPro" id="IPR007197">
    <property type="entry name" value="rSAM"/>
</dbReference>
<dbReference type="NCBIfam" id="TIGR00048">
    <property type="entry name" value="rRNA_mod_RlmN"/>
    <property type="match status" value="1"/>
</dbReference>
<dbReference type="PANTHER" id="PTHR30544">
    <property type="entry name" value="23S RRNA METHYLTRANSFERASE"/>
    <property type="match status" value="1"/>
</dbReference>
<dbReference type="PANTHER" id="PTHR30544:SF5">
    <property type="entry name" value="RADICAL SAM CORE DOMAIN-CONTAINING PROTEIN"/>
    <property type="match status" value="1"/>
</dbReference>
<dbReference type="Pfam" id="PF04055">
    <property type="entry name" value="Radical_SAM"/>
    <property type="match status" value="1"/>
</dbReference>
<dbReference type="Pfam" id="PF21016">
    <property type="entry name" value="RlmN_N"/>
    <property type="match status" value="1"/>
</dbReference>
<dbReference type="PIRSF" id="PIRSF006004">
    <property type="entry name" value="CHP00048"/>
    <property type="match status" value="1"/>
</dbReference>
<dbReference type="SFLD" id="SFLDF00275">
    <property type="entry name" value="adenosine_C2_methyltransferase"/>
    <property type="match status" value="1"/>
</dbReference>
<dbReference type="SFLD" id="SFLDG01062">
    <property type="entry name" value="methyltransferase_(Class_A)"/>
    <property type="match status" value="1"/>
</dbReference>
<dbReference type="SMART" id="SM00729">
    <property type="entry name" value="Elp3"/>
    <property type="match status" value="1"/>
</dbReference>
<dbReference type="SUPFAM" id="SSF102114">
    <property type="entry name" value="Radical SAM enzymes"/>
    <property type="match status" value="1"/>
</dbReference>
<dbReference type="PROSITE" id="PS51918">
    <property type="entry name" value="RADICAL_SAM"/>
    <property type="match status" value="1"/>
</dbReference>
<keyword id="KW-0004">4Fe-4S</keyword>
<keyword id="KW-0963">Cytoplasm</keyword>
<keyword id="KW-1015">Disulfide bond</keyword>
<keyword id="KW-0408">Iron</keyword>
<keyword id="KW-0411">Iron-sulfur</keyword>
<keyword id="KW-0479">Metal-binding</keyword>
<keyword id="KW-0489">Methyltransferase</keyword>
<keyword id="KW-0698">rRNA processing</keyword>
<keyword id="KW-0949">S-adenosyl-L-methionine</keyword>
<keyword id="KW-0808">Transferase</keyword>
<keyword id="KW-0819">tRNA processing</keyword>
<comment type="function">
    <text evidence="1">Specifically methylates position 2 of adenine 2503 in 23S rRNA and position 2 of adenine 37 in tRNAs.</text>
</comment>
<comment type="catalytic activity">
    <reaction evidence="1">
        <text>adenosine(2503) in 23S rRNA + 2 reduced [2Fe-2S]-[ferredoxin] + 2 S-adenosyl-L-methionine = 2-methyladenosine(2503) in 23S rRNA + 5'-deoxyadenosine + L-methionine + 2 oxidized [2Fe-2S]-[ferredoxin] + S-adenosyl-L-homocysteine</text>
        <dbReference type="Rhea" id="RHEA:42916"/>
        <dbReference type="Rhea" id="RHEA-COMP:10000"/>
        <dbReference type="Rhea" id="RHEA-COMP:10001"/>
        <dbReference type="Rhea" id="RHEA-COMP:10152"/>
        <dbReference type="Rhea" id="RHEA-COMP:10282"/>
        <dbReference type="ChEBI" id="CHEBI:17319"/>
        <dbReference type="ChEBI" id="CHEBI:33737"/>
        <dbReference type="ChEBI" id="CHEBI:33738"/>
        <dbReference type="ChEBI" id="CHEBI:57844"/>
        <dbReference type="ChEBI" id="CHEBI:57856"/>
        <dbReference type="ChEBI" id="CHEBI:59789"/>
        <dbReference type="ChEBI" id="CHEBI:74411"/>
        <dbReference type="ChEBI" id="CHEBI:74497"/>
        <dbReference type="EC" id="2.1.1.192"/>
    </reaction>
</comment>
<comment type="catalytic activity">
    <reaction evidence="1">
        <text>adenosine(37) in tRNA + 2 reduced [2Fe-2S]-[ferredoxin] + 2 S-adenosyl-L-methionine = 2-methyladenosine(37) in tRNA + 5'-deoxyadenosine + L-methionine + 2 oxidized [2Fe-2S]-[ferredoxin] + S-adenosyl-L-homocysteine</text>
        <dbReference type="Rhea" id="RHEA:43332"/>
        <dbReference type="Rhea" id="RHEA-COMP:10000"/>
        <dbReference type="Rhea" id="RHEA-COMP:10001"/>
        <dbReference type="Rhea" id="RHEA-COMP:10162"/>
        <dbReference type="Rhea" id="RHEA-COMP:10485"/>
        <dbReference type="ChEBI" id="CHEBI:17319"/>
        <dbReference type="ChEBI" id="CHEBI:33737"/>
        <dbReference type="ChEBI" id="CHEBI:33738"/>
        <dbReference type="ChEBI" id="CHEBI:57844"/>
        <dbReference type="ChEBI" id="CHEBI:57856"/>
        <dbReference type="ChEBI" id="CHEBI:59789"/>
        <dbReference type="ChEBI" id="CHEBI:74411"/>
        <dbReference type="ChEBI" id="CHEBI:74497"/>
        <dbReference type="EC" id="2.1.1.192"/>
    </reaction>
</comment>
<comment type="cofactor">
    <cofactor evidence="1">
        <name>[4Fe-4S] cluster</name>
        <dbReference type="ChEBI" id="CHEBI:49883"/>
    </cofactor>
    <text evidence="1">Binds 1 [4Fe-4S] cluster. The cluster is coordinated with 3 cysteines and an exchangeable S-adenosyl-L-methionine.</text>
</comment>
<comment type="subcellular location">
    <subcellularLocation>
        <location evidence="1">Cytoplasm</location>
    </subcellularLocation>
</comment>
<comment type="miscellaneous">
    <text evidence="1">Reaction proceeds by a ping-pong mechanism involving intermediate methylation of a conserved cysteine residue.</text>
</comment>
<comment type="similarity">
    <text evidence="1">Belongs to the radical SAM superfamily. RlmN family.</text>
</comment>
<reference key="1">
    <citation type="submission" date="2007-11" db="EMBL/GenBank/DDBJ databases">
        <title>The genome sequence of the hyperthermophilic bacterium Thermotoga neapolitana.</title>
        <authorList>
            <person name="Lim S.K."/>
            <person name="Kim J.S."/>
            <person name="Cha S.H."/>
            <person name="Park B.C."/>
            <person name="Lee D.S."/>
            <person name="Tae H.S."/>
            <person name="Kim S.-J."/>
            <person name="Kim J.J."/>
            <person name="Park K.J."/>
            <person name="Lee S.Y."/>
        </authorList>
    </citation>
    <scope>NUCLEOTIDE SEQUENCE [LARGE SCALE GENOMIC DNA]</scope>
    <source>
        <strain>ATCC 49049 / DSM 4359 / NBRC 107923 / NS-E</strain>
    </source>
</reference>
<name>RLMN_THENN</name>
<evidence type="ECO:0000255" key="1">
    <source>
        <dbReference type="HAMAP-Rule" id="MF_01849"/>
    </source>
</evidence>
<evidence type="ECO:0000255" key="2">
    <source>
        <dbReference type="PROSITE-ProRule" id="PRU01266"/>
    </source>
</evidence>
<accession>B9K7Z6</accession>
<organism>
    <name type="scientific">Thermotoga neapolitana (strain ATCC 49049 / DSM 4359 / NBRC 107923 / NS-E)</name>
    <dbReference type="NCBI Taxonomy" id="309803"/>
    <lineage>
        <taxon>Bacteria</taxon>
        <taxon>Thermotogati</taxon>
        <taxon>Thermotogota</taxon>
        <taxon>Thermotogae</taxon>
        <taxon>Thermotogales</taxon>
        <taxon>Thermotogaceae</taxon>
        <taxon>Thermotoga</taxon>
    </lineage>
</organism>
<protein>
    <recommendedName>
        <fullName evidence="1">Probable dual-specificity RNA methyltransferase RlmN</fullName>
        <ecNumber evidence="1">2.1.1.192</ecNumber>
    </recommendedName>
    <alternativeName>
        <fullName evidence="1">23S rRNA (adenine(2503)-C(2))-methyltransferase</fullName>
    </alternativeName>
    <alternativeName>
        <fullName evidence="1">23S rRNA m2A2503 methyltransferase</fullName>
    </alternativeName>
    <alternativeName>
        <fullName evidence="1">Ribosomal RNA large subunit methyltransferase N</fullName>
    </alternativeName>
    <alternativeName>
        <fullName evidence="1">tRNA (adenine(37)-C(2))-methyltransferase</fullName>
    </alternativeName>
    <alternativeName>
        <fullName evidence="1">tRNA m2A37 methyltransferase</fullName>
    </alternativeName>
</protein>
<sequence>MKNLLDLSYDELVSEITSLGLERYRADQILDWVFDKKVNNFDEMTNLSKQHRALLKEHFTIPFLKLLEKRVSKIDGTTKFLWELEDGNTIESVMIFHPGRITACISTQVGCPVGCTFCATGMSGFVRNLTTGEIVSQILSMEKEEGKKIGNVVYMGMGEPLLNYENTIKSIRILNHKKMGNIGIRRITISTVGIPEKIIQLADEGLDVKLALSLHAPTNFKRDQLVPLNRKYSVEEILNAIKVYQMKTGKRVTIEYVLIRGVNDEISDAKKLAEILKGLKVFVNLIPVNPTVAGLSKPSRQRILAFKRILLENGIEAEIRQEKGSDIEAACGQLRLKRKVSSP</sequence>
<proteinExistence type="inferred from homology"/>